<evidence type="ECO:0000255" key="1">
    <source>
        <dbReference type="HAMAP-Rule" id="MF_01721"/>
    </source>
</evidence>
<dbReference type="EC" id="7.5.2.12" evidence="1"/>
<dbReference type="EMBL" id="AE016853">
    <property type="protein sequence ID" value="AAO56142.1"/>
    <property type="molecule type" value="Genomic_DNA"/>
</dbReference>
<dbReference type="RefSeq" id="NP_792447.1">
    <property type="nucleotide sequence ID" value="NC_004578.1"/>
</dbReference>
<dbReference type="RefSeq" id="WP_011104123.1">
    <property type="nucleotide sequence ID" value="NC_004578.1"/>
</dbReference>
<dbReference type="SMR" id="Q882I8"/>
<dbReference type="STRING" id="223283.PSPTO_2639"/>
<dbReference type="DNASU" id="1184291"/>
<dbReference type="GeneID" id="1184291"/>
<dbReference type="KEGG" id="pst:PSPTO_2639"/>
<dbReference type="PATRIC" id="fig|223283.9.peg.2689"/>
<dbReference type="eggNOG" id="COG1129">
    <property type="taxonomic scope" value="Bacteria"/>
</dbReference>
<dbReference type="HOGENOM" id="CLU_000604_92_3_6"/>
<dbReference type="OrthoDB" id="9776369at2"/>
<dbReference type="PhylomeDB" id="Q882I8"/>
<dbReference type="Proteomes" id="UP000002515">
    <property type="component" value="Chromosome"/>
</dbReference>
<dbReference type="GO" id="GO:0005886">
    <property type="term" value="C:plasma membrane"/>
    <property type="evidence" value="ECO:0007669"/>
    <property type="project" value="UniProtKB-SubCell"/>
</dbReference>
<dbReference type="GO" id="GO:0015612">
    <property type="term" value="F:ABC-type L-arabinose transporter activity"/>
    <property type="evidence" value="ECO:0007669"/>
    <property type="project" value="UniProtKB-EC"/>
</dbReference>
<dbReference type="GO" id="GO:0005524">
    <property type="term" value="F:ATP binding"/>
    <property type="evidence" value="ECO:0007669"/>
    <property type="project" value="UniProtKB-KW"/>
</dbReference>
<dbReference type="GO" id="GO:0016887">
    <property type="term" value="F:ATP hydrolysis activity"/>
    <property type="evidence" value="ECO:0007669"/>
    <property type="project" value="InterPro"/>
</dbReference>
<dbReference type="CDD" id="cd03216">
    <property type="entry name" value="ABC_Carb_Monos_I"/>
    <property type="match status" value="1"/>
</dbReference>
<dbReference type="CDD" id="cd03215">
    <property type="entry name" value="ABC_Carb_Monos_II"/>
    <property type="match status" value="1"/>
</dbReference>
<dbReference type="FunFam" id="3.40.50.300:FF:000126">
    <property type="entry name" value="Galactose/methyl galactoside import ATP-binding protein MglA"/>
    <property type="match status" value="1"/>
</dbReference>
<dbReference type="FunFam" id="3.40.50.300:FF:000127">
    <property type="entry name" value="Ribose import ATP-binding protein RbsA"/>
    <property type="match status" value="1"/>
</dbReference>
<dbReference type="Gene3D" id="3.40.50.300">
    <property type="entry name" value="P-loop containing nucleotide triphosphate hydrolases"/>
    <property type="match status" value="2"/>
</dbReference>
<dbReference type="InterPro" id="IPR003593">
    <property type="entry name" value="AAA+_ATPase"/>
</dbReference>
<dbReference type="InterPro" id="IPR050107">
    <property type="entry name" value="ABC_carbohydrate_import_ATPase"/>
</dbReference>
<dbReference type="InterPro" id="IPR003439">
    <property type="entry name" value="ABC_transporter-like_ATP-bd"/>
</dbReference>
<dbReference type="InterPro" id="IPR017871">
    <property type="entry name" value="ABC_transporter-like_CS"/>
</dbReference>
<dbReference type="InterPro" id="IPR027417">
    <property type="entry name" value="P-loop_NTPase"/>
</dbReference>
<dbReference type="NCBIfam" id="NF008442">
    <property type="entry name" value="PRK11288.1"/>
    <property type="match status" value="1"/>
</dbReference>
<dbReference type="PANTHER" id="PTHR43790:SF6">
    <property type="entry name" value="ARABINOSE IMPORT ATP-BINDING PROTEIN ARAG"/>
    <property type="match status" value="1"/>
</dbReference>
<dbReference type="PANTHER" id="PTHR43790">
    <property type="entry name" value="CARBOHYDRATE TRANSPORT ATP-BINDING PROTEIN MG119-RELATED"/>
    <property type="match status" value="1"/>
</dbReference>
<dbReference type="Pfam" id="PF00005">
    <property type="entry name" value="ABC_tran"/>
    <property type="match status" value="2"/>
</dbReference>
<dbReference type="SMART" id="SM00382">
    <property type="entry name" value="AAA"/>
    <property type="match status" value="2"/>
</dbReference>
<dbReference type="SUPFAM" id="SSF52540">
    <property type="entry name" value="P-loop containing nucleoside triphosphate hydrolases"/>
    <property type="match status" value="2"/>
</dbReference>
<dbReference type="PROSITE" id="PS00211">
    <property type="entry name" value="ABC_TRANSPORTER_1"/>
    <property type="match status" value="2"/>
</dbReference>
<dbReference type="PROSITE" id="PS50893">
    <property type="entry name" value="ABC_TRANSPORTER_2"/>
    <property type="match status" value="2"/>
</dbReference>
<dbReference type="PROSITE" id="PS51268">
    <property type="entry name" value="ARAG"/>
    <property type="match status" value="1"/>
</dbReference>
<name>ARAG_PSESM</name>
<protein>
    <recommendedName>
        <fullName evidence="1">Arabinose import ATP-binding protein AraG</fullName>
        <ecNumber evidence="1">7.5.2.12</ecNumber>
    </recommendedName>
</protein>
<feature type="chain" id="PRO_0000270473" description="Arabinose import ATP-binding protein AraG">
    <location>
        <begin position="1"/>
        <end position="507"/>
    </location>
</feature>
<feature type="domain" description="ABC transporter 1" evidence="1">
    <location>
        <begin position="14"/>
        <end position="249"/>
    </location>
</feature>
<feature type="domain" description="ABC transporter 2" evidence="1">
    <location>
        <begin position="249"/>
        <end position="505"/>
    </location>
</feature>
<feature type="binding site" evidence="1">
    <location>
        <begin position="46"/>
        <end position="53"/>
    </location>
    <ligand>
        <name>ATP</name>
        <dbReference type="ChEBI" id="CHEBI:30616"/>
    </ligand>
</feature>
<accession>Q882I8</accession>
<comment type="function">
    <text evidence="1">Part of the ABC transporter complex AraFGH involved in arabinose import. Responsible for energy coupling to the transport system.</text>
</comment>
<comment type="catalytic activity">
    <reaction evidence="1">
        <text>L-arabinose(out) + ATP + H2O = L-arabinose(in) + ADP + phosphate + H(+)</text>
        <dbReference type="Rhea" id="RHEA:30007"/>
        <dbReference type="ChEBI" id="CHEBI:15377"/>
        <dbReference type="ChEBI" id="CHEBI:15378"/>
        <dbReference type="ChEBI" id="CHEBI:17535"/>
        <dbReference type="ChEBI" id="CHEBI:30616"/>
        <dbReference type="ChEBI" id="CHEBI:43474"/>
        <dbReference type="ChEBI" id="CHEBI:456216"/>
        <dbReference type="EC" id="7.5.2.12"/>
    </reaction>
</comment>
<comment type="subunit">
    <text evidence="1">The complex is composed of two ATP-binding proteins (AraG), two transmembrane proteins (AraH) and a solute-binding protein (AraF).</text>
</comment>
<comment type="subcellular location">
    <subcellularLocation>
        <location evidence="1">Cell inner membrane</location>
        <topology evidence="1">Peripheral membrane protein</topology>
    </subcellularLocation>
</comment>
<comment type="similarity">
    <text evidence="1">Belongs to the ABC transporter superfamily. Arabinose importer (TC 3.A.1.2.2) family.</text>
</comment>
<sequence length="507" mass="55301">MQQAIEQTATGGALRFNGICKVFPGVKALSDISFEARPGSVHALMGENGAGKSTLLKILGGSYQPNSGTLQIGEHSYQFKSTAESIAAGVAVIHQELHLVPEMTVAENLLLGHMPNRFGLINRGAMYRRAGELLKGLADEIDPRTRLGDLSLGQRQLVEIAKAMSRNAHVIAFDEPTSSLSAREIDRLMAIIVRLRDEGRVILYVSHRMEEIFRVCDAVTVFKDGRFVKTFEQMADLDHDRLVTCMVGRDIQDIYNYRPRQHQGPSLRVTGLLGLGLQEPVSFAVQKGEVLGFFGLVGAGRTELFRILSGLTRSTAGSLQLDGQPLTLKSPRDAIAAGVLLCPEDRKKEGIVPLSSVAENINIGARPRHVNLGCLIQGGWERDNARAQIKSMNVKTPSPEQQIMFLSGGNQQKAILGRWLSMPMKVLLLDEPTRGIDVGAKSEIYEIIHTLAADGIAVIVVSSDLMEVMGISDRILVMSEGAITGELNRDEADESRLLQLALPRTRG</sequence>
<keyword id="KW-0067">ATP-binding</keyword>
<keyword id="KW-0997">Cell inner membrane</keyword>
<keyword id="KW-1003">Cell membrane</keyword>
<keyword id="KW-0472">Membrane</keyword>
<keyword id="KW-0547">Nucleotide-binding</keyword>
<keyword id="KW-1185">Reference proteome</keyword>
<keyword id="KW-0677">Repeat</keyword>
<keyword id="KW-0762">Sugar transport</keyword>
<keyword id="KW-1278">Translocase</keyword>
<keyword id="KW-0813">Transport</keyword>
<proteinExistence type="inferred from homology"/>
<gene>
    <name evidence="1" type="primary">araG</name>
    <name type="ordered locus">PSPTO_2639</name>
</gene>
<reference key="1">
    <citation type="journal article" date="2003" name="Proc. Natl. Acad. Sci. U.S.A.">
        <title>The complete genome sequence of the Arabidopsis and tomato pathogen Pseudomonas syringae pv. tomato DC3000.</title>
        <authorList>
            <person name="Buell C.R."/>
            <person name="Joardar V."/>
            <person name="Lindeberg M."/>
            <person name="Selengut J."/>
            <person name="Paulsen I.T."/>
            <person name="Gwinn M.L."/>
            <person name="Dodson R.J."/>
            <person name="DeBoy R.T."/>
            <person name="Durkin A.S."/>
            <person name="Kolonay J.F."/>
            <person name="Madupu R."/>
            <person name="Daugherty S.C."/>
            <person name="Brinkac L.M."/>
            <person name="Beanan M.J."/>
            <person name="Haft D.H."/>
            <person name="Nelson W.C."/>
            <person name="Davidsen T.M."/>
            <person name="Zafar N."/>
            <person name="Zhou L."/>
            <person name="Liu J."/>
            <person name="Yuan Q."/>
            <person name="Khouri H.M."/>
            <person name="Fedorova N.B."/>
            <person name="Tran B."/>
            <person name="Russell D."/>
            <person name="Berry K.J."/>
            <person name="Utterback T.R."/>
            <person name="Van Aken S.E."/>
            <person name="Feldblyum T.V."/>
            <person name="D'Ascenzo M."/>
            <person name="Deng W.-L."/>
            <person name="Ramos A.R."/>
            <person name="Alfano J.R."/>
            <person name="Cartinhour S."/>
            <person name="Chatterjee A.K."/>
            <person name="Delaney T.P."/>
            <person name="Lazarowitz S.G."/>
            <person name="Martin G.B."/>
            <person name="Schneider D.J."/>
            <person name="Tang X."/>
            <person name="Bender C.L."/>
            <person name="White O."/>
            <person name="Fraser C.M."/>
            <person name="Collmer A."/>
        </authorList>
    </citation>
    <scope>NUCLEOTIDE SEQUENCE [LARGE SCALE GENOMIC DNA]</scope>
    <source>
        <strain>ATCC BAA-871 / DC3000</strain>
    </source>
</reference>
<organism>
    <name type="scientific">Pseudomonas syringae pv. tomato (strain ATCC BAA-871 / DC3000)</name>
    <dbReference type="NCBI Taxonomy" id="223283"/>
    <lineage>
        <taxon>Bacteria</taxon>
        <taxon>Pseudomonadati</taxon>
        <taxon>Pseudomonadota</taxon>
        <taxon>Gammaproteobacteria</taxon>
        <taxon>Pseudomonadales</taxon>
        <taxon>Pseudomonadaceae</taxon>
        <taxon>Pseudomonas</taxon>
    </lineage>
</organism>